<gene>
    <name type="primary">Psmc6</name>
    <name type="synonym">Sug2</name>
</gene>
<name>PRS10_MOUSE</name>
<reference key="1">
    <citation type="journal article" date="2005" name="Science">
        <title>The transcriptional landscape of the mammalian genome.</title>
        <authorList>
            <person name="Carninci P."/>
            <person name="Kasukawa T."/>
            <person name="Katayama S."/>
            <person name="Gough J."/>
            <person name="Frith M.C."/>
            <person name="Maeda N."/>
            <person name="Oyama R."/>
            <person name="Ravasi T."/>
            <person name="Lenhard B."/>
            <person name="Wells C."/>
            <person name="Kodzius R."/>
            <person name="Shimokawa K."/>
            <person name="Bajic V.B."/>
            <person name="Brenner S.E."/>
            <person name="Batalov S."/>
            <person name="Forrest A.R."/>
            <person name="Zavolan M."/>
            <person name="Davis M.J."/>
            <person name="Wilming L.G."/>
            <person name="Aidinis V."/>
            <person name="Allen J.E."/>
            <person name="Ambesi-Impiombato A."/>
            <person name="Apweiler R."/>
            <person name="Aturaliya R.N."/>
            <person name="Bailey T.L."/>
            <person name="Bansal M."/>
            <person name="Baxter L."/>
            <person name="Beisel K.W."/>
            <person name="Bersano T."/>
            <person name="Bono H."/>
            <person name="Chalk A.M."/>
            <person name="Chiu K.P."/>
            <person name="Choudhary V."/>
            <person name="Christoffels A."/>
            <person name="Clutterbuck D.R."/>
            <person name="Crowe M.L."/>
            <person name="Dalla E."/>
            <person name="Dalrymple B.P."/>
            <person name="de Bono B."/>
            <person name="Della Gatta G."/>
            <person name="di Bernardo D."/>
            <person name="Down T."/>
            <person name="Engstrom P."/>
            <person name="Fagiolini M."/>
            <person name="Faulkner G."/>
            <person name="Fletcher C.F."/>
            <person name="Fukushima T."/>
            <person name="Furuno M."/>
            <person name="Futaki S."/>
            <person name="Gariboldi M."/>
            <person name="Georgii-Hemming P."/>
            <person name="Gingeras T.R."/>
            <person name="Gojobori T."/>
            <person name="Green R.E."/>
            <person name="Gustincich S."/>
            <person name="Harbers M."/>
            <person name="Hayashi Y."/>
            <person name="Hensch T.K."/>
            <person name="Hirokawa N."/>
            <person name="Hill D."/>
            <person name="Huminiecki L."/>
            <person name="Iacono M."/>
            <person name="Ikeo K."/>
            <person name="Iwama A."/>
            <person name="Ishikawa T."/>
            <person name="Jakt M."/>
            <person name="Kanapin A."/>
            <person name="Katoh M."/>
            <person name="Kawasawa Y."/>
            <person name="Kelso J."/>
            <person name="Kitamura H."/>
            <person name="Kitano H."/>
            <person name="Kollias G."/>
            <person name="Krishnan S.P."/>
            <person name="Kruger A."/>
            <person name="Kummerfeld S.K."/>
            <person name="Kurochkin I.V."/>
            <person name="Lareau L.F."/>
            <person name="Lazarevic D."/>
            <person name="Lipovich L."/>
            <person name="Liu J."/>
            <person name="Liuni S."/>
            <person name="McWilliam S."/>
            <person name="Madan Babu M."/>
            <person name="Madera M."/>
            <person name="Marchionni L."/>
            <person name="Matsuda H."/>
            <person name="Matsuzawa S."/>
            <person name="Miki H."/>
            <person name="Mignone F."/>
            <person name="Miyake S."/>
            <person name="Morris K."/>
            <person name="Mottagui-Tabar S."/>
            <person name="Mulder N."/>
            <person name="Nakano N."/>
            <person name="Nakauchi H."/>
            <person name="Ng P."/>
            <person name="Nilsson R."/>
            <person name="Nishiguchi S."/>
            <person name="Nishikawa S."/>
            <person name="Nori F."/>
            <person name="Ohara O."/>
            <person name="Okazaki Y."/>
            <person name="Orlando V."/>
            <person name="Pang K.C."/>
            <person name="Pavan W.J."/>
            <person name="Pavesi G."/>
            <person name="Pesole G."/>
            <person name="Petrovsky N."/>
            <person name="Piazza S."/>
            <person name="Reed J."/>
            <person name="Reid J.F."/>
            <person name="Ring B.Z."/>
            <person name="Ringwald M."/>
            <person name="Rost B."/>
            <person name="Ruan Y."/>
            <person name="Salzberg S.L."/>
            <person name="Sandelin A."/>
            <person name="Schneider C."/>
            <person name="Schoenbach C."/>
            <person name="Sekiguchi K."/>
            <person name="Semple C.A."/>
            <person name="Seno S."/>
            <person name="Sessa L."/>
            <person name="Sheng Y."/>
            <person name="Shibata Y."/>
            <person name="Shimada H."/>
            <person name="Shimada K."/>
            <person name="Silva D."/>
            <person name="Sinclair B."/>
            <person name="Sperling S."/>
            <person name="Stupka E."/>
            <person name="Sugiura K."/>
            <person name="Sultana R."/>
            <person name="Takenaka Y."/>
            <person name="Taki K."/>
            <person name="Tammoja K."/>
            <person name="Tan S.L."/>
            <person name="Tang S."/>
            <person name="Taylor M.S."/>
            <person name="Tegner J."/>
            <person name="Teichmann S.A."/>
            <person name="Ueda H.R."/>
            <person name="van Nimwegen E."/>
            <person name="Verardo R."/>
            <person name="Wei C.L."/>
            <person name="Yagi K."/>
            <person name="Yamanishi H."/>
            <person name="Zabarovsky E."/>
            <person name="Zhu S."/>
            <person name="Zimmer A."/>
            <person name="Hide W."/>
            <person name="Bult C."/>
            <person name="Grimmond S.M."/>
            <person name="Teasdale R.D."/>
            <person name="Liu E.T."/>
            <person name="Brusic V."/>
            <person name="Quackenbush J."/>
            <person name="Wahlestedt C."/>
            <person name="Mattick J.S."/>
            <person name="Hume D.A."/>
            <person name="Kai C."/>
            <person name="Sasaki D."/>
            <person name="Tomaru Y."/>
            <person name="Fukuda S."/>
            <person name="Kanamori-Katayama M."/>
            <person name="Suzuki M."/>
            <person name="Aoki J."/>
            <person name="Arakawa T."/>
            <person name="Iida J."/>
            <person name="Imamura K."/>
            <person name="Itoh M."/>
            <person name="Kato T."/>
            <person name="Kawaji H."/>
            <person name="Kawagashira N."/>
            <person name="Kawashima T."/>
            <person name="Kojima M."/>
            <person name="Kondo S."/>
            <person name="Konno H."/>
            <person name="Nakano K."/>
            <person name="Ninomiya N."/>
            <person name="Nishio T."/>
            <person name="Okada M."/>
            <person name="Plessy C."/>
            <person name="Shibata K."/>
            <person name="Shiraki T."/>
            <person name="Suzuki S."/>
            <person name="Tagami M."/>
            <person name="Waki K."/>
            <person name="Watahiki A."/>
            <person name="Okamura-Oho Y."/>
            <person name="Suzuki H."/>
            <person name="Kawai J."/>
            <person name="Hayashizaki Y."/>
        </authorList>
    </citation>
    <scope>NUCLEOTIDE SEQUENCE [LARGE SCALE MRNA]</scope>
    <source>
        <strain>C57BL/6J</strain>
        <tissue>Embryo</tissue>
        <tissue>Lung</tissue>
    </source>
</reference>
<reference key="2">
    <citation type="journal article" date="2004" name="Genome Res.">
        <title>The status, quality, and expansion of the NIH full-length cDNA project: the Mammalian Gene Collection (MGC).</title>
        <authorList>
            <consortium name="The MGC Project Team"/>
        </authorList>
    </citation>
    <scope>NUCLEOTIDE SEQUENCE [LARGE SCALE MRNA]</scope>
    <source>
        <strain>C57BL/6J</strain>
        <strain>FVB/N</strain>
        <tissue>Brain</tissue>
        <tissue>Mammary tumor</tissue>
    </source>
</reference>
<reference key="3">
    <citation type="submission" date="2007-07" db="UniProtKB">
        <authorList>
            <person name="Lubec G."/>
            <person name="Yang J.W."/>
            <person name="Zigmond M."/>
        </authorList>
    </citation>
    <scope>PROTEIN SEQUENCE OF 299-309</scope>
    <source>
        <tissue>Brain</tissue>
    </source>
</reference>
<reference key="4">
    <citation type="journal article" date="2006" name="Circ. Res.">
        <title>Mapping the murine cardiac 26S proteasome complexes.</title>
        <authorList>
            <person name="Gomes A.V."/>
            <person name="Zong C."/>
            <person name="Edmondson R.D."/>
            <person name="Li X."/>
            <person name="Stefani E."/>
            <person name="Zhang J."/>
            <person name="Jones R.C."/>
            <person name="Thyparambil S."/>
            <person name="Wang G.W."/>
            <person name="Qiao X."/>
            <person name="Bardag-Gorce F."/>
            <person name="Ping P."/>
        </authorList>
    </citation>
    <scope>IDENTIFICATION IN THE 19S PROTEASOME REGULATORY COMPLEX</scope>
</reference>
<reference key="5">
    <citation type="journal article" date="2010" name="Cell">
        <title>A tissue-specific atlas of mouse protein phosphorylation and expression.</title>
        <authorList>
            <person name="Huttlin E.L."/>
            <person name="Jedrychowski M.P."/>
            <person name="Elias J.E."/>
            <person name="Goswami T."/>
            <person name="Rad R."/>
            <person name="Beausoleil S.A."/>
            <person name="Villen J."/>
            <person name="Haas W."/>
            <person name="Sowa M.E."/>
            <person name="Gygi S.P."/>
        </authorList>
    </citation>
    <scope>IDENTIFICATION BY MASS SPECTROMETRY [LARGE SCALE ANALYSIS]</scope>
    <source>
        <tissue>Brain</tissue>
        <tissue>Brown adipose tissue</tissue>
        <tissue>Heart</tissue>
        <tissue>Kidney</tissue>
        <tissue>Liver</tissue>
        <tissue>Lung</tissue>
        <tissue>Pancreas</tissue>
        <tissue>Spleen</tissue>
        <tissue>Testis</tissue>
    </source>
</reference>
<reference key="6">
    <citation type="journal article" date="2013" name="Mol. Cell">
        <title>SIRT5-mediated lysine desuccinylation impacts diverse metabolic pathways.</title>
        <authorList>
            <person name="Park J."/>
            <person name="Chen Y."/>
            <person name="Tishkoff D.X."/>
            <person name="Peng C."/>
            <person name="Tan M."/>
            <person name="Dai L."/>
            <person name="Xie Z."/>
            <person name="Zhang Y."/>
            <person name="Zwaans B.M."/>
            <person name="Skinner M.E."/>
            <person name="Lombard D.B."/>
            <person name="Zhao Y."/>
        </authorList>
    </citation>
    <scope>ACETYLATION [LARGE SCALE ANALYSIS] AT LYS-206</scope>
    <scope>IDENTIFICATION BY MASS SPECTROMETRY [LARGE SCALE ANALYSIS]</scope>
    <source>
        <tissue>Embryonic fibroblast</tissue>
    </source>
</reference>
<dbReference type="EMBL" id="AK012174">
    <property type="protein sequence ID" value="BAB28078.1"/>
    <property type="molecule type" value="mRNA"/>
</dbReference>
<dbReference type="EMBL" id="AK014354">
    <property type="protein sequence ID" value="BAB29293.1"/>
    <property type="molecule type" value="mRNA"/>
</dbReference>
<dbReference type="EMBL" id="AK144728">
    <property type="protein sequence ID" value="BAE26034.1"/>
    <property type="molecule type" value="mRNA"/>
</dbReference>
<dbReference type="EMBL" id="AK166961">
    <property type="protein sequence ID" value="BAE39144.1"/>
    <property type="molecule type" value="mRNA"/>
</dbReference>
<dbReference type="EMBL" id="BC043044">
    <property type="protein sequence ID" value="AAH43044.1"/>
    <property type="molecule type" value="mRNA"/>
</dbReference>
<dbReference type="EMBL" id="BC057997">
    <property type="protein sequence ID" value="AAH57997.1"/>
    <property type="molecule type" value="mRNA"/>
</dbReference>
<dbReference type="CCDS" id="CCDS26974.1"/>
<dbReference type="RefSeq" id="NP_080235.2">
    <property type="nucleotide sequence ID" value="NM_025959.3"/>
</dbReference>
<dbReference type="SMR" id="P62334"/>
<dbReference type="BioGRID" id="211932">
    <property type="interactions" value="58"/>
</dbReference>
<dbReference type="FunCoup" id="P62334">
    <property type="interactions" value="3292"/>
</dbReference>
<dbReference type="IntAct" id="P62334">
    <property type="interactions" value="18"/>
</dbReference>
<dbReference type="MINT" id="P62334"/>
<dbReference type="STRING" id="10090.ENSMUSP00000022380"/>
<dbReference type="iPTMnet" id="P62334"/>
<dbReference type="MetOSite" id="P62334"/>
<dbReference type="PhosphoSitePlus" id="P62334"/>
<dbReference type="SwissPalm" id="P62334"/>
<dbReference type="REPRODUCTION-2DPAGE" id="IPI00125971"/>
<dbReference type="REPRODUCTION-2DPAGE" id="P62334"/>
<dbReference type="jPOST" id="P62334"/>
<dbReference type="PaxDb" id="10090-ENSMUSP00000022380"/>
<dbReference type="PeptideAtlas" id="P62334"/>
<dbReference type="ProteomicsDB" id="291822"/>
<dbReference type="Pumba" id="P62334"/>
<dbReference type="Antibodypedia" id="23885">
    <property type="antibodies" value="305 antibodies from 34 providers"/>
</dbReference>
<dbReference type="DNASU" id="67089"/>
<dbReference type="Ensembl" id="ENSMUST00000022380.9">
    <property type="protein sequence ID" value="ENSMUSP00000022380.8"/>
    <property type="gene ID" value="ENSMUSG00000021832.9"/>
</dbReference>
<dbReference type="GeneID" id="67089"/>
<dbReference type="KEGG" id="mmu:67089"/>
<dbReference type="UCSC" id="uc007tgn.1">
    <property type="organism name" value="mouse"/>
</dbReference>
<dbReference type="AGR" id="MGI:1914339"/>
<dbReference type="CTD" id="5706"/>
<dbReference type="MGI" id="MGI:1914339">
    <property type="gene designation" value="Psmc6"/>
</dbReference>
<dbReference type="VEuPathDB" id="HostDB:ENSMUSG00000021832"/>
<dbReference type="eggNOG" id="KOG0651">
    <property type="taxonomic scope" value="Eukaryota"/>
</dbReference>
<dbReference type="GeneTree" id="ENSGT01020000230346"/>
<dbReference type="HOGENOM" id="CLU_000688_2_2_1"/>
<dbReference type="InParanoid" id="P62334"/>
<dbReference type="OMA" id="DHEPCVI"/>
<dbReference type="OrthoDB" id="1937997at2759"/>
<dbReference type="PhylomeDB" id="P62334"/>
<dbReference type="TreeFam" id="TF106229"/>
<dbReference type="BRENDA" id="5.6.1.5">
    <property type="organism ID" value="3474"/>
</dbReference>
<dbReference type="Reactome" id="R-MMU-1169091">
    <property type="pathway name" value="Activation of NF-kappaB in B cells"/>
</dbReference>
<dbReference type="Reactome" id="R-MMU-1234176">
    <property type="pathway name" value="Oxygen-dependent proline hydroxylation of Hypoxia-inducible Factor Alpha"/>
</dbReference>
<dbReference type="Reactome" id="R-MMU-1236978">
    <property type="pathway name" value="Cross-presentation of soluble exogenous antigens (endosomes)"/>
</dbReference>
<dbReference type="Reactome" id="R-MMU-174084">
    <property type="pathway name" value="Autodegradation of Cdh1 by Cdh1:APC/C"/>
</dbReference>
<dbReference type="Reactome" id="R-MMU-174154">
    <property type="pathway name" value="APC/C:Cdc20 mediated degradation of Securin"/>
</dbReference>
<dbReference type="Reactome" id="R-MMU-174178">
    <property type="pathway name" value="APC/C:Cdh1 mediated degradation of Cdc20 and other APC/C:Cdh1 targeted proteins in late mitosis/early G1"/>
</dbReference>
<dbReference type="Reactome" id="R-MMU-174184">
    <property type="pathway name" value="Cdc20:Phospho-APC/C mediated degradation of Cyclin A"/>
</dbReference>
<dbReference type="Reactome" id="R-MMU-187577">
    <property type="pathway name" value="SCF(Skp2)-mediated degradation of p27/p21"/>
</dbReference>
<dbReference type="Reactome" id="R-MMU-195253">
    <property type="pathway name" value="Degradation of beta-catenin by the destruction complex"/>
</dbReference>
<dbReference type="Reactome" id="R-MMU-202424">
    <property type="pathway name" value="Downstream TCR signaling"/>
</dbReference>
<dbReference type="Reactome" id="R-MMU-2467813">
    <property type="pathway name" value="Separation of Sister Chromatids"/>
</dbReference>
<dbReference type="Reactome" id="R-MMU-2871837">
    <property type="pathway name" value="FCERI mediated NF-kB activation"/>
</dbReference>
<dbReference type="Reactome" id="R-MMU-349425">
    <property type="pathway name" value="Autodegradation of the E3 ubiquitin ligase COP1"/>
</dbReference>
<dbReference type="Reactome" id="R-MMU-350562">
    <property type="pathway name" value="Regulation of ornithine decarboxylase (ODC)"/>
</dbReference>
<dbReference type="Reactome" id="R-MMU-382556">
    <property type="pathway name" value="ABC-family proteins mediated transport"/>
</dbReference>
<dbReference type="Reactome" id="R-MMU-450408">
    <property type="pathway name" value="AUF1 (hnRNP D0) binds and destabilizes mRNA"/>
</dbReference>
<dbReference type="Reactome" id="R-MMU-4608870">
    <property type="pathway name" value="Asymmetric localization of PCP proteins"/>
</dbReference>
<dbReference type="Reactome" id="R-MMU-4641257">
    <property type="pathway name" value="Degradation of AXIN"/>
</dbReference>
<dbReference type="Reactome" id="R-MMU-4641258">
    <property type="pathway name" value="Degradation of DVL"/>
</dbReference>
<dbReference type="Reactome" id="R-MMU-5358346">
    <property type="pathway name" value="Hedgehog ligand biogenesis"/>
</dbReference>
<dbReference type="Reactome" id="R-MMU-5607761">
    <property type="pathway name" value="Dectin-1 mediated noncanonical NF-kB signaling"/>
</dbReference>
<dbReference type="Reactome" id="R-MMU-5607764">
    <property type="pathway name" value="CLEC7A (Dectin-1) signaling"/>
</dbReference>
<dbReference type="Reactome" id="R-MMU-5610780">
    <property type="pathway name" value="Degradation of GLI1 by the proteasome"/>
</dbReference>
<dbReference type="Reactome" id="R-MMU-5610785">
    <property type="pathway name" value="GLI3 is processed to GLI3R by the proteasome"/>
</dbReference>
<dbReference type="Reactome" id="R-MMU-5632684">
    <property type="pathway name" value="Hedgehog 'on' state"/>
</dbReference>
<dbReference type="Reactome" id="R-MMU-5658442">
    <property type="pathway name" value="Regulation of RAS by GAPs"/>
</dbReference>
<dbReference type="Reactome" id="R-MMU-5668541">
    <property type="pathway name" value="TNFR2 non-canonical NF-kB pathway"/>
</dbReference>
<dbReference type="Reactome" id="R-MMU-5676590">
    <property type="pathway name" value="NIK--&gt;noncanonical NF-kB signaling"/>
</dbReference>
<dbReference type="Reactome" id="R-MMU-5687128">
    <property type="pathway name" value="MAPK6/MAPK4 signaling"/>
</dbReference>
<dbReference type="Reactome" id="R-MMU-5689603">
    <property type="pathway name" value="UCH proteinases"/>
</dbReference>
<dbReference type="Reactome" id="R-MMU-5689880">
    <property type="pathway name" value="Ub-specific processing proteases"/>
</dbReference>
<dbReference type="Reactome" id="R-MMU-68867">
    <property type="pathway name" value="Assembly of the pre-replicative complex"/>
</dbReference>
<dbReference type="Reactome" id="R-MMU-68949">
    <property type="pathway name" value="Orc1 removal from chromatin"/>
</dbReference>
<dbReference type="Reactome" id="R-MMU-69017">
    <property type="pathway name" value="CDK-mediated phosphorylation and removal of Cdc6"/>
</dbReference>
<dbReference type="Reactome" id="R-MMU-69481">
    <property type="pathway name" value="G2/M Checkpoints"/>
</dbReference>
<dbReference type="Reactome" id="R-MMU-69601">
    <property type="pathway name" value="Ubiquitin Mediated Degradation of Phosphorylated Cdc25A"/>
</dbReference>
<dbReference type="Reactome" id="R-MMU-75815">
    <property type="pathway name" value="Ubiquitin-dependent degradation of Cyclin D"/>
</dbReference>
<dbReference type="Reactome" id="R-MMU-8852276">
    <property type="pathway name" value="The role of GTSE1 in G2/M progression after G2 checkpoint"/>
</dbReference>
<dbReference type="Reactome" id="R-MMU-8854050">
    <property type="pathway name" value="FBXL7 down-regulates AURKA during mitotic entry and in early mitosis"/>
</dbReference>
<dbReference type="Reactome" id="R-MMU-8939236">
    <property type="pathway name" value="RUNX1 regulates transcription of genes involved in differentiation of HSCs"/>
</dbReference>
<dbReference type="Reactome" id="R-MMU-8939902">
    <property type="pathway name" value="Regulation of RUNX2 expression and activity"/>
</dbReference>
<dbReference type="Reactome" id="R-MMU-8941858">
    <property type="pathway name" value="Regulation of RUNX3 expression and activity"/>
</dbReference>
<dbReference type="Reactome" id="R-MMU-8948751">
    <property type="pathway name" value="Regulation of PTEN stability and activity"/>
</dbReference>
<dbReference type="Reactome" id="R-MMU-8951664">
    <property type="pathway name" value="Neddylation"/>
</dbReference>
<dbReference type="Reactome" id="R-MMU-9020702">
    <property type="pathway name" value="Interleukin-1 signaling"/>
</dbReference>
<dbReference type="Reactome" id="R-MMU-9755511">
    <property type="pathway name" value="KEAP1-NFE2L2 pathway"/>
</dbReference>
<dbReference type="Reactome" id="R-MMU-9762114">
    <property type="pathway name" value="GSK3B and BTRC:CUL1-mediated-degradation of NFE2L2"/>
</dbReference>
<dbReference type="Reactome" id="R-MMU-983168">
    <property type="pathway name" value="Antigen processing: Ubiquitination &amp; Proteasome degradation"/>
</dbReference>
<dbReference type="Reactome" id="R-MMU-9907900">
    <property type="pathway name" value="Proteasome assembly"/>
</dbReference>
<dbReference type="BioGRID-ORCS" id="67089">
    <property type="hits" value="23 hits in 79 CRISPR screens"/>
</dbReference>
<dbReference type="ChiTaRS" id="Psmc6">
    <property type="organism name" value="mouse"/>
</dbReference>
<dbReference type="PRO" id="PR:P62334"/>
<dbReference type="Proteomes" id="UP000000589">
    <property type="component" value="Chromosome 14"/>
</dbReference>
<dbReference type="RNAct" id="P62334">
    <property type="molecule type" value="protein"/>
</dbReference>
<dbReference type="Bgee" id="ENSMUSG00000021832">
    <property type="expression patterns" value="Expressed in floor plate of midbrain and 269 other cell types or tissues"/>
</dbReference>
<dbReference type="ExpressionAtlas" id="P62334">
    <property type="expression patterns" value="baseline and differential"/>
</dbReference>
<dbReference type="GO" id="GO:0031597">
    <property type="term" value="C:cytosolic proteasome complex"/>
    <property type="evidence" value="ECO:0007669"/>
    <property type="project" value="Ensembl"/>
</dbReference>
<dbReference type="GO" id="GO:0016234">
    <property type="term" value="C:inclusion body"/>
    <property type="evidence" value="ECO:0007669"/>
    <property type="project" value="Ensembl"/>
</dbReference>
<dbReference type="GO" id="GO:0005634">
    <property type="term" value="C:nucleus"/>
    <property type="evidence" value="ECO:0007669"/>
    <property type="project" value="UniProtKB-SubCell"/>
</dbReference>
<dbReference type="GO" id="GO:0022624">
    <property type="term" value="C:proteasome accessory complex"/>
    <property type="evidence" value="ECO:0000314"/>
    <property type="project" value="UniProtKB"/>
</dbReference>
<dbReference type="GO" id="GO:0005524">
    <property type="term" value="F:ATP binding"/>
    <property type="evidence" value="ECO:0007669"/>
    <property type="project" value="UniProtKB-KW"/>
</dbReference>
<dbReference type="GO" id="GO:0016887">
    <property type="term" value="F:ATP hydrolysis activity"/>
    <property type="evidence" value="ECO:0007669"/>
    <property type="project" value="InterPro"/>
</dbReference>
<dbReference type="GO" id="GO:0042802">
    <property type="term" value="F:identical protein binding"/>
    <property type="evidence" value="ECO:0007669"/>
    <property type="project" value="Ensembl"/>
</dbReference>
<dbReference type="GO" id="GO:0090261">
    <property type="term" value="P:positive regulation of inclusion body assembly"/>
    <property type="evidence" value="ECO:0007669"/>
    <property type="project" value="Ensembl"/>
</dbReference>
<dbReference type="CDD" id="cd19502">
    <property type="entry name" value="RecA-like_PAN_like"/>
    <property type="match status" value="1"/>
</dbReference>
<dbReference type="FunFam" id="1.10.8.60:FF:000008">
    <property type="entry name" value="26S protease regulatory subunit 10B"/>
    <property type="match status" value="1"/>
</dbReference>
<dbReference type="FunFam" id="2.40.50.140:FF:000027">
    <property type="entry name" value="26S protease regulatory subunit 10B"/>
    <property type="match status" value="1"/>
</dbReference>
<dbReference type="FunFam" id="3.40.50.300:FF:000034">
    <property type="entry name" value="26S protease regulatory subunit 10B"/>
    <property type="match status" value="1"/>
</dbReference>
<dbReference type="Gene3D" id="1.10.8.60">
    <property type="match status" value="1"/>
</dbReference>
<dbReference type="Gene3D" id="2.40.50.140">
    <property type="entry name" value="Nucleic acid-binding proteins"/>
    <property type="match status" value="1"/>
</dbReference>
<dbReference type="Gene3D" id="3.40.50.300">
    <property type="entry name" value="P-loop containing nucleotide triphosphate hydrolases"/>
    <property type="match status" value="1"/>
</dbReference>
<dbReference type="InterPro" id="IPR050221">
    <property type="entry name" value="26S_Proteasome_ATPase"/>
</dbReference>
<dbReference type="InterPro" id="IPR003593">
    <property type="entry name" value="AAA+_ATPase"/>
</dbReference>
<dbReference type="InterPro" id="IPR041569">
    <property type="entry name" value="AAA_lid_3"/>
</dbReference>
<dbReference type="InterPro" id="IPR003959">
    <property type="entry name" value="ATPase_AAA_core"/>
</dbReference>
<dbReference type="InterPro" id="IPR003960">
    <property type="entry name" value="ATPase_AAA_CS"/>
</dbReference>
<dbReference type="InterPro" id="IPR012340">
    <property type="entry name" value="NA-bd_OB-fold"/>
</dbReference>
<dbReference type="InterPro" id="IPR027417">
    <property type="entry name" value="P-loop_NTPase"/>
</dbReference>
<dbReference type="InterPro" id="IPR032501">
    <property type="entry name" value="Prot_ATP_ID_OB_2nd"/>
</dbReference>
<dbReference type="PANTHER" id="PTHR23073">
    <property type="entry name" value="26S PROTEASOME REGULATORY SUBUNIT"/>
    <property type="match status" value="1"/>
</dbReference>
<dbReference type="Pfam" id="PF00004">
    <property type="entry name" value="AAA"/>
    <property type="match status" value="1"/>
</dbReference>
<dbReference type="Pfam" id="PF17862">
    <property type="entry name" value="AAA_lid_3"/>
    <property type="match status" value="1"/>
</dbReference>
<dbReference type="Pfam" id="PF16450">
    <property type="entry name" value="Prot_ATP_ID_OB_C"/>
    <property type="match status" value="1"/>
</dbReference>
<dbReference type="SMART" id="SM00382">
    <property type="entry name" value="AAA"/>
    <property type="match status" value="1"/>
</dbReference>
<dbReference type="SUPFAM" id="SSF52540">
    <property type="entry name" value="P-loop containing nucleoside triphosphate hydrolases"/>
    <property type="match status" value="1"/>
</dbReference>
<dbReference type="PROSITE" id="PS00674">
    <property type="entry name" value="AAA"/>
    <property type="match status" value="1"/>
</dbReference>
<organism>
    <name type="scientific">Mus musculus</name>
    <name type="common">Mouse</name>
    <dbReference type="NCBI Taxonomy" id="10090"/>
    <lineage>
        <taxon>Eukaryota</taxon>
        <taxon>Metazoa</taxon>
        <taxon>Chordata</taxon>
        <taxon>Craniata</taxon>
        <taxon>Vertebrata</taxon>
        <taxon>Euteleostomi</taxon>
        <taxon>Mammalia</taxon>
        <taxon>Eutheria</taxon>
        <taxon>Euarchontoglires</taxon>
        <taxon>Glires</taxon>
        <taxon>Rodentia</taxon>
        <taxon>Myomorpha</taxon>
        <taxon>Muroidea</taxon>
        <taxon>Muridae</taxon>
        <taxon>Murinae</taxon>
        <taxon>Mus</taxon>
        <taxon>Mus</taxon>
    </lineage>
</organism>
<keyword id="KW-0007">Acetylation</keyword>
<keyword id="KW-0067">ATP-binding</keyword>
<keyword id="KW-0963">Cytoplasm</keyword>
<keyword id="KW-0903">Direct protein sequencing</keyword>
<keyword id="KW-0547">Nucleotide-binding</keyword>
<keyword id="KW-0539">Nucleus</keyword>
<keyword id="KW-0597">Phosphoprotein</keyword>
<keyword id="KW-0647">Proteasome</keyword>
<keyword id="KW-1185">Reference proteome</keyword>
<sequence>MADPRDKALQDYRKKLLEHKEIDGRLKELREQLKELTKQYEKSENDLKALQSVGQIVGEVLKQLTEEKFIVKATNGPRYVVGCRRQLDKSKLKPGTRVALDMTTLTIMRYLPREVDPLVYNMSHEDPGNVSYSEIGGLSEQIRELREVIELPLTNPELFQRVGIIPPKGCLLYGPPGTGKTLLARAVASQLDCNFLKVVSSSIVDKYIGESARLIREMFNYARDHQPCIIFMDEIDAIGGRRFSEGTSADREIQRTLMELLNQMDGFDTLHRVKMIMATNRPDTLDPALLRPGRLDRKIHIDLPNEQARLDILKIHAGPITKHGEIDYEAIVKLSDGFNGADLRNVCTEAGMFAIRADHDFVVQEDFMKAVRKVADSKKLESKLDYKPV</sequence>
<evidence type="ECO:0000250" key="1"/>
<evidence type="ECO:0000250" key="2">
    <source>
        <dbReference type="UniProtKB" id="P62333"/>
    </source>
</evidence>
<evidence type="ECO:0000255" key="3"/>
<evidence type="ECO:0000269" key="4">
    <source>
    </source>
</evidence>
<evidence type="ECO:0000305" key="5"/>
<evidence type="ECO:0007744" key="6">
    <source>
    </source>
</evidence>
<accession>P62334</accession>
<accession>P49719</accession>
<accession>Q3TKK1</accession>
<accession>Q810A6</accession>
<accession>Q92524</accession>
<accession>Q9CXH9</accession>
<protein>
    <recommendedName>
        <fullName>26S proteasome regulatory subunit 10B</fullName>
    </recommendedName>
    <alternativeName>
        <fullName>26S proteasome AAA-ATPase subunit RPT4</fullName>
    </alternativeName>
    <alternativeName>
        <fullName>Proteasome 26S subunit ATPase 6</fullName>
    </alternativeName>
    <alternativeName>
        <fullName>Proteasome subunit p42</fullName>
    </alternativeName>
</protein>
<comment type="function">
    <text evidence="2">Component of the 26S proteasome, a multiprotein complex involved in the ATP-dependent degradation of ubiquitinated proteins. This complex plays a key role in the maintenance of protein homeostasis by removing misfolded or damaged proteins, which could impair cellular functions, and by removing proteins whose functions are no longer required. Therefore, the proteasome participates in numerous cellular processes, including cell cycle progression, apoptosis, or DNA damage repair. PSMC6 belongs to the heterohexameric ring of AAA (ATPases associated with diverse cellular activities) proteins that unfolds ubiquitinated target proteins that are concurrently translocated into a proteolytic chamber and degraded into peptides.</text>
</comment>
<comment type="subunit">
    <text evidence="2 4">Component of the 19S proteasome regulatory particle complex. The 26S proteasome consists of a 20S core particle (CP) and two 19S regulatory subunits (RP). The regulatory particle is made of a lid composed of 9 subunits, a base containing 6 ATPases including PSMC6 and few additional components. Interacts with PAAF1.</text>
</comment>
<comment type="subcellular location">
    <subcellularLocation>
        <location evidence="1">Cytoplasm</location>
    </subcellularLocation>
    <subcellularLocation>
        <location evidence="1">Nucleus</location>
    </subcellularLocation>
</comment>
<comment type="similarity">
    <text evidence="5">Belongs to the AAA ATPase family.</text>
</comment>
<proteinExistence type="evidence at protein level"/>
<feature type="chain" id="PRO_0000084733" description="26S proteasome regulatory subunit 10B">
    <location>
        <begin position="1"/>
        <end position="389"/>
    </location>
</feature>
<feature type="binding site" evidence="3">
    <location>
        <begin position="174"/>
        <end position="181"/>
    </location>
    <ligand>
        <name>ATP</name>
        <dbReference type="ChEBI" id="CHEBI:30616"/>
    </ligand>
</feature>
<feature type="modified residue" description="N6-acetyllysine" evidence="2">
    <location>
        <position position="72"/>
    </location>
</feature>
<feature type="modified residue" description="N6-acetyllysine" evidence="6">
    <location>
        <position position="206"/>
    </location>
</feature>
<feature type="modified residue" description="Phosphoserine" evidence="2">
    <location>
        <position position="244"/>
    </location>
</feature>
<feature type="sequence conflict" description="In Ref. 1; BAB29293." evidence="5" ref="1">
    <original>E</original>
    <variation>D</variation>
    <location>
        <position position="144"/>
    </location>
</feature>
<feature type="sequence conflict" description="In Ref. 1; BAB29293." evidence="5" ref="1">
    <original>A</original>
    <variation>V</variation>
    <location>
        <position position="222"/>
    </location>
</feature>
<feature type="sequence conflict" description="In Ref. 2; AAH43044." evidence="5" ref="2">
    <original>R</original>
    <variation>P</variation>
    <location>
        <position position="241"/>
    </location>
</feature>
<feature type="sequence conflict" description="In Ref. 1; BAB29293." evidence="5" ref="1">
    <original>R</original>
    <variation>S</variation>
    <location>
        <position position="281"/>
    </location>
</feature>